<dbReference type="EMBL" id="CP000159">
    <property type="protein sequence ID" value="ABC44952.1"/>
    <property type="molecule type" value="Genomic_DNA"/>
</dbReference>
<dbReference type="RefSeq" id="WP_011403794.1">
    <property type="nucleotide sequence ID" value="NC_007677.1"/>
</dbReference>
<dbReference type="RefSeq" id="YP_445166.1">
    <property type="nucleotide sequence ID" value="NC_007677.1"/>
</dbReference>
<dbReference type="SMR" id="Q2S3R5"/>
<dbReference type="STRING" id="309807.SRU_1034"/>
<dbReference type="EnsemblBacteria" id="ABC44952">
    <property type="protein sequence ID" value="ABC44952"/>
    <property type="gene ID" value="SRU_1034"/>
</dbReference>
<dbReference type="GeneID" id="83727963"/>
<dbReference type="KEGG" id="sru:SRU_1034"/>
<dbReference type="PATRIC" id="fig|309807.25.peg.1072"/>
<dbReference type="eggNOG" id="COG0051">
    <property type="taxonomic scope" value="Bacteria"/>
</dbReference>
<dbReference type="HOGENOM" id="CLU_122625_1_3_10"/>
<dbReference type="OrthoDB" id="9804464at2"/>
<dbReference type="Proteomes" id="UP000008674">
    <property type="component" value="Chromosome"/>
</dbReference>
<dbReference type="GO" id="GO:1990904">
    <property type="term" value="C:ribonucleoprotein complex"/>
    <property type="evidence" value="ECO:0007669"/>
    <property type="project" value="UniProtKB-KW"/>
</dbReference>
<dbReference type="GO" id="GO:0005840">
    <property type="term" value="C:ribosome"/>
    <property type="evidence" value="ECO:0007669"/>
    <property type="project" value="UniProtKB-KW"/>
</dbReference>
<dbReference type="GO" id="GO:0003735">
    <property type="term" value="F:structural constituent of ribosome"/>
    <property type="evidence" value="ECO:0007669"/>
    <property type="project" value="InterPro"/>
</dbReference>
<dbReference type="GO" id="GO:0000049">
    <property type="term" value="F:tRNA binding"/>
    <property type="evidence" value="ECO:0007669"/>
    <property type="project" value="UniProtKB-UniRule"/>
</dbReference>
<dbReference type="GO" id="GO:0006412">
    <property type="term" value="P:translation"/>
    <property type="evidence" value="ECO:0007669"/>
    <property type="project" value="UniProtKB-UniRule"/>
</dbReference>
<dbReference type="FunFam" id="3.30.70.600:FF:000003">
    <property type="entry name" value="30S ribosomal protein S10"/>
    <property type="match status" value="1"/>
</dbReference>
<dbReference type="Gene3D" id="3.30.70.600">
    <property type="entry name" value="Ribosomal protein S10 domain"/>
    <property type="match status" value="1"/>
</dbReference>
<dbReference type="HAMAP" id="MF_00508">
    <property type="entry name" value="Ribosomal_uS10"/>
    <property type="match status" value="1"/>
</dbReference>
<dbReference type="InterPro" id="IPR001848">
    <property type="entry name" value="Ribosomal_uS10"/>
</dbReference>
<dbReference type="InterPro" id="IPR018268">
    <property type="entry name" value="Ribosomal_uS10_CS"/>
</dbReference>
<dbReference type="InterPro" id="IPR027486">
    <property type="entry name" value="Ribosomal_uS10_dom"/>
</dbReference>
<dbReference type="InterPro" id="IPR036838">
    <property type="entry name" value="Ribosomal_uS10_dom_sf"/>
</dbReference>
<dbReference type="NCBIfam" id="NF001861">
    <property type="entry name" value="PRK00596.1"/>
    <property type="match status" value="1"/>
</dbReference>
<dbReference type="NCBIfam" id="TIGR01049">
    <property type="entry name" value="rpsJ_bact"/>
    <property type="match status" value="1"/>
</dbReference>
<dbReference type="PANTHER" id="PTHR11700">
    <property type="entry name" value="30S RIBOSOMAL PROTEIN S10 FAMILY MEMBER"/>
    <property type="match status" value="1"/>
</dbReference>
<dbReference type="Pfam" id="PF00338">
    <property type="entry name" value="Ribosomal_S10"/>
    <property type="match status" value="1"/>
</dbReference>
<dbReference type="PRINTS" id="PR00971">
    <property type="entry name" value="RIBOSOMALS10"/>
</dbReference>
<dbReference type="SMART" id="SM01403">
    <property type="entry name" value="Ribosomal_S10"/>
    <property type="match status" value="1"/>
</dbReference>
<dbReference type="SUPFAM" id="SSF54999">
    <property type="entry name" value="Ribosomal protein S10"/>
    <property type="match status" value="1"/>
</dbReference>
<dbReference type="PROSITE" id="PS00361">
    <property type="entry name" value="RIBOSOMAL_S10"/>
    <property type="match status" value="1"/>
</dbReference>
<accession>Q2S3R5</accession>
<keyword id="KW-1185">Reference proteome</keyword>
<keyword id="KW-0687">Ribonucleoprotein</keyword>
<keyword id="KW-0689">Ribosomal protein</keyword>
<proteinExistence type="inferred from homology"/>
<feature type="chain" id="PRO_0000237090" description="Small ribosomal subunit protein uS10">
    <location>
        <begin position="1"/>
        <end position="103"/>
    </location>
</feature>
<evidence type="ECO:0000255" key="1">
    <source>
        <dbReference type="HAMAP-Rule" id="MF_00508"/>
    </source>
</evidence>
<evidence type="ECO:0000305" key="2"/>
<sequence length="103" mass="11604">MAAQQDIRIKLKSYDHTLIDKSAEKIIRTVKSTGAVVSGPVPLPTEKKIYTVLRGPHVDKKSREQFERRHHKRLIDILSSSSDTVDSLMQLELPSGVDVEIKV</sequence>
<organism>
    <name type="scientific">Salinibacter ruber (strain DSM 13855 / M31)</name>
    <dbReference type="NCBI Taxonomy" id="309807"/>
    <lineage>
        <taxon>Bacteria</taxon>
        <taxon>Pseudomonadati</taxon>
        <taxon>Rhodothermota</taxon>
        <taxon>Rhodothermia</taxon>
        <taxon>Rhodothermales</taxon>
        <taxon>Salinibacteraceae</taxon>
        <taxon>Salinibacter</taxon>
    </lineage>
</organism>
<name>RS10_SALRD</name>
<reference key="1">
    <citation type="journal article" date="2005" name="Proc. Natl. Acad. Sci. U.S.A.">
        <title>The genome of Salinibacter ruber: convergence and gene exchange among hyperhalophilic bacteria and archaea.</title>
        <authorList>
            <person name="Mongodin E.F."/>
            <person name="Nelson K.E."/>
            <person name="Daugherty S."/>
            <person name="DeBoy R.T."/>
            <person name="Wister J."/>
            <person name="Khouri H."/>
            <person name="Weidman J."/>
            <person name="Walsh D.A."/>
            <person name="Papke R.T."/>
            <person name="Sanchez Perez G."/>
            <person name="Sharma A.K."/>
            <person name="Nesbo C.L."/>
            <person name="MacLeod D."/>
            <person name="Bapteste E."/>
            <person name="Doolittle W.F."/>
            <person name="Charlebois R.L."/>
            <person name="Legault B."/>
            <person name="Rodriguez-Valera F."/>
        </authorList>
    </citation>
    <scope>NUCLEOTIDE SEQUENCE [LARGE SCALE GENOMIC DNA]</scope>
    <source>
        <strain>DSM 13855 / CECT 5946 / M31</strain>
    </source>
</reference>
<comment type="function">
    <text evidence="1">Involved in the binding of tRNA to the ribosomes.</text>
</comment>
<comment type="subunit">
    <text evidence="1">Part of the 30S ribosomal subunit.</text>
</comment>
<comment type="similarity">
    <text evidence="1">Belongs to the universal ribosomal protein uS10 family.</text>
</comment>
<gene>
    <name evidence="1" type="primary">rpsJ</name>
    <name type="ordered locus">SRU_1034</name>
</gene>
<protein>
    <recommendedName>
        <fullName evidence="1">Small ribosomal subunit protein uS10</fullName>
    </recommendedName>
    <alternativeName>
        <fullName evidence="2">30S ribosomal protein S10</fullName>
    </alternativeName>
</protein>